<sequence length="67" mass="7977">MPKMKTHRGAAKRFKKTGTGKLKRSHAYTSHMFRHKSQKQKRKLRKAAIVHSGDFKRIHQMLTYKKK</sequence>
<protein>
    <recommendedName>
        <fullName evidence="1">Large ribosomal subunit protein bL35</fullName>
    </recommendedName>
    <alternativeName>
        <fullName evidence="3">50S ribosomal protein L35</fullName>
    </alternativeName>
</protein>
<proteinExistence type="inferred from homology"/>
<comment type="similarity">
    <text evidence="1">Belongs to the bacterial ribosomal protein bL35 family.</text>
</comment>
<feature type="chain" id="PRO_0000258636" description="Large ribosomal subunit protein bL35">
    <location>
        <begin position="1"/>
        <end position="67"/>
    </location>
</feature>
<feature type="region of interest" description="Disordered" evidence="2">
    <location>
        <begin position="1"/>
        <end position="41"/>
    </location>
</feature>
<reference key="1">
    <citation type="submission" date="2003-10" db="EMBL/GenBank/DDBJ databases">
        <title>The complete genome sequence of the alkaliphilic Bacillus clausii KSM-K16.</title>
        <authorList>
            <person name="Takaki Y."/>
            <person name="Kageyama Y."/>
            <person name="Shimamura S."/>
            <person name="Suzuki H."/>
            <person name="Nishi S."/>
            <person name="Hatada Y."/>
            <person name="Kawai S."/>
            <person name="Ito S."/>
            <person name="Horikoshi K."/>
        </authorList>
    </citation>
    <scope>NUCLEOTIDE SEQUENCE [LARGE SCALE GENOMIC DNA]</scope>
    <source>
        <strain>KSM-K16</strain>
    </source>
</reference>
<accession>Q5WEI7</accession>
<keyword id="KW-1185">Reference proteome</keyword>
<keyword id="KW-0687">Ribonucleoprotein</keyword>
<keyword id="KW-0689">Ribosomal protein</keyword>
<organism>
    <name type="scientific">Shouchella clausii (strain KSM-K16)</name>
    <name type="common">Alkalihalobacillus clausii</name>
    <dbReference type="NCBI Taxonomy" id="66692"/>
    <lineage>
        <taxon>Bacteria</taxon>
        <taxon>Bacillati</taxon>
        <taxon>Bacillota</taxon>
        <taxon>Bacilli</taxon>
        <taxon>Bacillales</taxon>
        <taxon>Bacillaceae</taxon>
        <taxon>Shouchella</taxon>
    </lineage>
</organism>
<gene>
    <name evidence="1" type="primary">rpmI</name>
    <name type="ordered locus">ABC2688</name>
</gene>
<evidence type="ECO:0000255" key="1">
    <source>
        <dbReference type="HAMAP-Rule" id="MF_00514"/>
    </source>
</evidence>
<evidence type="ECO:0000256" key="2">
    <source>
        <dbReference type="SAM" id="MobiDB-lite"/>
    </source>
</evidence>
<evidence type="ECO:0000305" key="3"/>
<dbReference type="EMBL" id="AP006627">
    <property type="protein sequence ID" value="BAD65223.1"/>
    <property type="molecule type" value="Genomic_DNA"/>
</dbReference>
<dbReference type="RefSeq" id="WP_011247531.1">
    <property type="nucleotide sequence ID" value="NC_006582.1"/>
</dbReference>
<dbReference type="SMR" id="Q5WEI7"/>
<dbReference type="STRING" id="66692.ABC2688"/>
<dbReference type="KEGG" id="bcl:ABC2688"/>
<dbReference type="eggNOG" id="COG0291">
    <property type="taxonomic scope" value="Bacteria"/>
</dbReference>
<dbReference type="HOGENOM" id="CLU_169643_3_0_9"/>
<dbReference type="OrthoDB" id="47476at2"/>
<dbReference type="Proteomes" id="UP000001168">
    <property type="component" value="Chromosome"/>
</dbReference>
<dbReference type="GO" id="GO:0022625">
    <property type="term" value="C:cytosolic large ribosomal subunit"/>
    <property type="evidence" value="ECO:0007669"/>
    <property type="project" value="TreeGrafter"/>
</dbReference>
<dbReference type="GO" id="GO:0003735">
    <property type="term" value="F:structural constituent of ribosome"/>
    <property type="evidence" value="ECO:0007669"/>
    <property type="project" value="InterPro"/>
</dbReference>
<dbReference type="GO" id="GO:0006412">
    <property type="term" value="P:translation"/>
    <property type="evidence" value="ECO:0007669"/>
    <property type="project" value="UniProtKB-UniRule"/>
</dbReference>
<dbReference type="FunFam" id="4.10.410.60:FF:000001">
    <property type="entry name" value="50S ribosomal protein L35"/>
    <property type="match status" value="1"/>
</dbReference>
<dbReference type="Gene3D" id="4.10.410.60">
    <property type="match status" value="1"/>
</dbReference>
<dbReference type="HAMAP" id="MF_00514">
    <property type="entry name" value="Ribosomal_bL35"/>
    <property type="match status" value="1"/>
</dbReference>
<dbReference type="InterPro" id="IPR001706">
    <property type="entry name" value="Ribosomal_bL35"/>
</dbReference>
<dbReference type="InterPro" id="IPR021137">
    <property type="entry name" value="Ribosomal_bL35-like"/>
</dbReference>
<dbReference type="InterPro" id="IPR018265">
    <property type="entry name" value="Ribosomal_bL35_CS"/>
</dbReference>
<dbReference type="InterPro" id="IPR037229">
    <property type="entry name" value="Ribosomal_bL35_sf"/>
</dbReference>
<dbReference type="NCBIfam" id="TIGR00001">
    <property type="entry name" value="rpmI_bact"/>
    <property type="match status" value="1"/>
</dbReference>
<dbReference type="PANTHER" id="PTHR33343">
    <property type="entry name" value="54S RIBOSOMAL PROTEIN BL35M"/>
    <property type="match status" value="1"/>
</dbReference>
<dbReference type="PANTHER" id="PTHR33343:SF1">
    <property type="entry name" value="LARGE RIBOSOMAL SUBUNIT PROTEIN BL35M"/>
    <property type="match status" value="1"/>
</dbReference>
<dbReference type="Pfam" id="PF01632">
    <property type="entry name" value="Ribosomal_L35p"/>
    <property type="match status" value="1"/>
</dbReference>
<dbReference type="PRINTS" id="PR00064">
    <property type="entry name" value="RIBOSOMALL35"/>
</dbReference>
<dbReference type="SUPFAM" id="SSF143034">
    <property type="entry name" value="L35p-like"/>
    <property type="match status" value="1"/>
</dbReference>
<dbReference type="PROSITE" id="PS00936">
    <property type="entry name" value="RIBOSOMAL_L35"/>
    <property type="match status" value="1"/>
</dbReference>
<name>RL35_SHOC1</name>